<gene>
    <name evidence="1" type="primary">murB</name>
    <name type="ordered locus">TW734</name>
</gene>
<reference key="1">
    <citation type="journal article" date="2003" name="Lancet">
        <title>Sequencing and analysis of the genome of the Whipple's disease bacterium Tropheryma whipplei.</title>
        <authorList>
            <person name="Bentley S.D."/>
            <person name="Maiwald M."/>
            <person name="Murphy L.D."/>
            <person name="Pallen M.J."/>
            <person name="Yeats C.A."/>
            <person name="Dover L.G."/>
            <person name="Norbertczak H.T."/>
            <person name="Besra G.S."/>
            <person name="Quail M.A."/>
            <person name="Harris D.E."/>
            <person name="von Herbay A."/>
            <person name="Goble A."/>
            <person name="Rutter S."/>
            <person name="Squares R."/>
            <person name="Squares S."/>
            <person name="Barrell B.G."/>
            <person name="Parkhill J."/>
            <person name="Relman D.A."/>
        </authorList>
    </citation>
    <scope>NUCLEOTIDE SEQUENCE [LARGE SCALE GENOMIC DNA]</scope>
    <source>
        <strain>TW08/27</strain>
    </source>
</reference>
<protein>
    <recommendedName>
        <fullName evidence="1">UDP-N-acetylenolpyruvoylglucosamine reductase</fullName>
        <ecNumber evidence="1">1.3.1.98</ecNumber>
    </recommendedName>
    <alternativeName>
        <fullName evidence="1">UDP-N-acetylmuramate dehydrogenase</fullName>
    </alternativeName>
</protein>
<accession>Q83HA7</accession>
<comment type="function">
    <text evidence="1">Cell wall formation.</text>
</comment>
<comment type="catalytic activity">
    <reaction evidence="1">
        <text>UDP-N-acetyl-alpha-D-muramate + NADP(+) = UDP-N-acetyl-3-O-(1-carboxyvinyl)-alpha-D-glucosamine + NADPH + H(+)</text>
        <dbReference type="Rhea" id="RHEA:12248"/>
        <dbReference type="ChEBI" id="CHEBI:15378"/>
        <dbReference type="ChEBI" id="CHEBI:57783"/>
        <dbReference type="ChEBI" id="CHEBI:58349"/>
        <dbReference type="ChEBI" id="CHEBI:68483"/>
        <dbReference type="ChEBI" id="CHEBI:70757"/>
        <dbReference type="EC" id="1.3.1.98"/>
    </reaction>
</comment>
<comment type="cofactor">
    <cofactor evidence="1">
        <name>FAD</name>
        <dbReference type="ChEBI" id="CHEBI:57692"/>
    </cofactor>
</comment>
<comment type="pathway">
    <text evidence="1">Cell wall biogenesis; peptidoglycan biosynthesis.</text>
</comment>
<comment type="subcellular location">
    <subcellularLocation>
        <location evidence="1">Cytoplasm</location>
    </subcellularLocation>
</comment>
<comment type="similarity">
    <text evidence="1">Belongs to the MurB family.</text>
</comment>
<feature type="chain" id="PRO_0000179283" description="UDP-N-acetylenolpyruvoylglucosamine reductase">
    <location>
        <begin position="1"/>
        <end position="351"/>
    </location>
</feature>
<feature type="domain" description="FAD-binding PCMH-type" evidence="1">
    <location>
        <begin position="11"/>
        <end position="213"/>
    </location>
</feature>
<feature type="active site" evidence="1">
    <location>
        <position position="158"/>
    </location>
</feature>
<feature type="active site" description="Proton donor" evidence="1">
    <location>
        <position position="239"/>
    </location>
</feature>
<feature type="active site" evidence="1">
    <location>
        <position position="343"/>
    </location>
</feature>
<keyword id="KW-0131">Cell cycle</keyword>
<keyword id="KW-0132">Cell division</keyword>
<keyword id="KW-0133">Cell shape</keyword>
<keyword id="KW-0961">Cell wall biogenesis/degradation</keyword>
<keyword id="KW-0963">Cytoplasm</keyword>
<keyword id="KW-0274">FAD</keyword>
<keyword id="KW-0285">Flavoprotein</keyword>
<keyword id="KW-0521">NADP</keyword>
<keyword id="KW-0560">Oxidoreductase</keyword>
<keyword id="KW-0573">Peptidoglycan synthesis</keyword>
<organism>
    <name type="scientific">Tropheryma whipplei (strain TW08/27)</name>
    <name type="common">Whipple's bacillus</name>
    <dbReference type="NCBI Taxonomy" id="218496"/>
    <lineage>
        <taxon>Bacteria</taxon>
        <taxon>Bacillati</taxon>
        <taxon>Actinomycetota</taxon>
        <taxon>Actinomycetes</taxon>
        <taxon>Micrococcales</taxon>
        <taxon>Tropherymataceae</taxon>
        <taxon>Tropheryma</taxon>
    </lineage>
</organism>
<proteinExistence type="inferred from homology"/>
<name>MURB_TROW8</name>
<sequence length="351" mass="37447">MVSFSEITTLGVGGSIACFIECSPDEFVERAPGLFRPGHHVLVVGGGSNLVASDCPFPGTVVRLKSRDTIISDDGNYTRFSVSAGTSWDDLVSYTLDLGFDQLSPMSGIPGTFGGALAQNISAYGAAVRDVLGSVEVYDACTSEVVTFGLEDMRYGYRTSALKNVRNKVILGGTLLLKPGPTPVLYRQLANALKVDLGTYCSGKQVRDQVLRIRAEKGMLPRYLVPKGFDVCNTSSVGSFFVNPIVSKEHLSRLRRLVPQGALNSSVIQTDEMGGVKVSAAFLLEQSGFEKGFCISGSQAAISTQHSLAIVNRGGATAAEVIELAGLITRTVSRKFDIHLIPEPVFVGLEL</sequence>
<evidence type="ECO:0000255" key="1">
    <source>
        <dbReference type="HAMAP-Rule" id="MF_00037"/>
    </source>
</evidence>
<dbReference type="EC" id="1.3.1.98" evidence="1"/>
<dbReference type="EMBL" id="BX251412">
    <property type="protein sequence ID" value="CAD67393.1"/>
    <property type="molecule type" value="Genomic_DNA"/>
</dbReference>
<dbReference type="RefSeq" id="WP_011096671.1">
    <property type="nucleotide sequence ID" value="NC_004551.1"/>
</dbReference>
<dbReference type="SMR" id="Q83HA7"/>
<dbReference type="GeneID" id="67388513"/>
<dbReference type="KEGG" id="tws:TW734"/>
<dbReference type="HOGENOM" id="CLU_035304_0_1_11"/>
<dbReference type="UniPathway" id="UPA00219"/>
<dbReference type="GO" id="GO:0005829">
    <property type="term" value="C:cytosol"/>
    <property type="evidence" value="ECO:0007669"/>
    <property type="project" value="TreeGrafter"/>
</dbReference>
<dbReference type="GO" id="GO:0071949">
    <property type="term" value="F:FAD binding"/>
    <property type="evidence" value="ECO:0007669"/>
    <property type="project" value="InterPro"/>
</dbReference>
<dbReference type="GO" id="GO:0008762">
    <property type="term" value="F:UDP-N-acetylmuramate dehydrogenase activity"/>
    <property type="evidence" value="ECO:0007669"/>
    <property type="project" value="UniProtKB-UniRule"/>
</dbReference>
<dbReference type="GO" id="GO:0051301">
    <property type="term" value="P:cell division"/>
    <property type="evidence" value="ECO:0007669"/>
    <property type="project" value="UniProtKB-KW"/>
</dbReference>
<dbReference type="GO" id="GO:0071555">
    <property type="term" value="P:cell wall organization"/>
    <property type="evidence" value="ECO:0007669"/>
    <property type="project" value="UniProtKB-KW"/>
</dbReference>
<dbReference type="GO" id="GO:0009252">
    <property type="term" value="P:peptidoglycan biosynthetic process"/>
    <property type="evidence" value="ECO:0007669"/>
    <property type="project" value="UniProtKB-UniRule"/>
</dbReference>
<dbReference type="GO" id="GO:0008360">
    <property type="term" value="P:regulation of cell shape"/>
    <property type="evidence" value="ECO:0007669"/>
    <property type="project" value="UniProtKB-KW"/>
</dbReference>
<dbReference type="Gene3D" id="3.30.465.10">
    <property type="match status" value="1"/>
</dbReference>
<dbReference type="Gene3D" id="3.90.78.10">
    <property type="entry name" value="UDP-N-acetylenolpyruvoylglucosamine reductase, C-terminal domain"/>
    <property type="match status" value="1"/>
</dbReference>
<dbReference type="Gene3D" id="3.30.43.10">
    <property type="entry name" value="Uridine Diphospho-n-acetylenolpyruvylglucosamine Reductase, domain 2"/>
    <property type="match status" value="1"/>
</dbReference>
<dbReference type="HAMAP" id="MF_00037">
    <property type="entry name" value="MurB"/>
    <property type="match status" value="1"/>
</dbReference>
<dbReference type="InterPro" id="IPR016166">
    <property type="entry name" value="FAD-bd_PCMH"/>
</dbReference>
<dbReference type="InterPro" id="IPR036318">
    <property type="entry name" value="FAD-bd_PCMH-like_sf"/>
</dbReference>
<dbReference type="InterPro" id="IPR016167">
    <property type="entry name" value="FAD-bd_PCMH_sub1"/>
</dbReference>
<dbReference type="InterPro" id="IPR016169">
    <property type="entry name" value="FAD-bd_PCMH_sub2"/>
</dbReference>
<dbReference type="InterPro" id="IPR003170">
    <property type="entry name" value="MurB"/>
</dbReference>
<dbReference type="InterPro" id="IPR011601">
    <property type="entry name" value="MurB_C"/>
</dbReference>
<dbReference type="InterPro" id="IPR036635">
    <property type="entry name" value="MurB_C_sf"/>
</dbReference>
<dbReference type="InterPro" id="IPR006094">
    <property type="entry name" value="Oxid_FAD_bind_N"/>
</dbReference>
<dbReference type="NCBIfam" id="NF010478">
    <property type="entry name" value="PRK13903.1"/>
    <property type="match status" value="1"/>
</dbReference>
<dbReference type="PANTHER" id="PTHR21071">
    <property type="entry name" value="UDP-N-ACETYLENOLPYRUVOYLGLUCOSAMINE REDUCTASE"/>
    <property type="match status" value="1"/>
</dbReference>
<dbReference type="PANTHER" id="PTHR21071:SF4">
    <property type="entry name" value="UDP-N-ACETYLENOLPYRUVOYLGLUCOSAMINE REDUCTASE"/>
    <property type="match status" value="1"/>
</dbReference>
<dbReference type="Pfam" id="PF01565">
    <property type="entry name" value="FAD_binding_4"/>
    <property type="match status" value="1"/>
</dbReference>
<dbReference type="Pfam" id="PF02873">
    <property type="entry name" value="MurB_C"/>
    <property type="match status" value="1"/>
</dbReference>
<dbReference type="SUPFAM" id="SSF56176">
    <property type="entry name" value="FAD-binding/transporter-associated domain-like"/>
    <property type="match status" value="1"/>
</dbReference>
<dbReference type="SUPFAM" id="SSF56194">
    <property type="entry name" value="Uridine diphospho-N-Acetylenolpyruvylglucosamine reductase, MurB, C-terminal domain"/>
    <property type="match status" value="1"/>
</dbReference>
<dbReference type="PROSITE" id="PS51387">
    <property type="entry name" value="FAD_PCMH"/>
    <property type="match status" value="1"/>
</dbReference>